<gene>
    <name evidence="1" type="primary">infA</name>
    <name type="ordered locus">Arth_2944</name>
</gene>
<comment type="function">
    <text evidence="1">One of the essential components for the initiation of protein synthesis. Stabilizes the binding of IF-2 and IF-3 on the 30S subunit to which N-formylmethionyl-tRNA(fMet) subsequently binds. Helps modulate mRNA selection, yielding the 30S pre-initiation complex (PIC). Upon addition of the 50S ribosomal subunit IF-1, IF-2 and IF-3 are released leaving the mature 70S translation initiation complex.</text>
</comment>
<comment type="subunit">
    <text evidence="1">Component of the 30S ribosomal translation pre-initiation complex which assembles on the 30S ribosome in the order IF-2 and IF-3, IF-1 and N-formylmethionyl-tRNA(fMet); mRNA recruitment can occur at any time during PIC assembly.</text>
</comment>
<comment type="subcellular location">
    <subcellularLocation>
        <location evidence="1">Cytoplasm</location>
    </subcellularLocation>
</comment>
<comment type="similarity">
    <text evidence="1">Belongs to the IF-1 family.</text>
</comment>
<sequence>MAKKDGVIEIEGVVTEALPNAMFRVELTNKHIVLAHISGKMRQHYIRILPEDRVVVELSPYDLTRGRIVYRYK</sequence>
<proteinExistence type="inferred from homology"/>
<reference key="1">
    <citation type="journal article" date="2013" name="Stand. Genomic Sci.">
        <title>Complete genome sequence of Arthrobacter sp. strain FB24.</title>
        <authorList>
            <person name="Nakatsu C.H."/>
            <person name="Barabote R."/>
            <person name="Thompson S."/>
            <person name="Bruce D."/>
            <person name="Detter C."/>
            <person name="Brettin T."/>
            <person name="Han C."/>
            <person name="Beasley F."/>
            <person name="Chen W."/>
            <person name="Konopka A."/>
            <person name="Xie G."/>
        </authorList>
    </citation>
    <scope>NUCLEOTIDE SEQUENCE [LARGE SCALE GENOMIC DNA]</scope>
    <source>
        <strain>FB24</strain>
    </source>
</reference>
<keyword id="KW-0963">Cytoplasm</keyword>
<keyword id="KW-0396">Initiation factor</keyword>
<keyword id="KW-0648">Protein biosynthesis</keyword>
<keyword id="KW-1185">Reference proteome</keyword>
<keyword id="KW-0694">RNA-binding</keyword>
<keyword id="KW-0699">rRNA-binding</keyword>
<evidence type="ECO:0000255" key="1">
    <source>
        <dbReference type="HAMAP-Rule" id="MF_00075"/>
    </source>
</evidence>
<name>IF1_ARTS2</name>
<organism>
    <name type="scientific">Arthrobacter sp. (strain FB24)</name>
    <dbReference type="NCBI Taxonomy" id="290399"/>
    <lineage>
        <taxon>Bacteria</taxon>
        <taxon>Bacillati</taxon>
        <taxon>Actinomycetota</taxon>
        <taxon>Actinomycetes</taxon>
        <taxon>Micrococcales</taxon>
        <taxon>Micrococcaceae</taxon>
        <taxon>Arthrobacter</taxon>
    </lineage>
</organism>
<accession>A0JZ53</accession>
<dbReference type="EMBL" id="CP000454">
    <property type="protein sequence ID" value="ABK04323.1"/>
    <property type="molecule type" value="Genomic_DNA"/>
</dbReference>
<dbReference type="RefSeq" id="WP_009358723.1">
    <property type="nucleotide sequence ID" value="NC_008541.1"/>
</dbReference>
<dbReference type="SMR" id="A0JZ53"/>
<dbReference type="STRING" id="290399.Arth_2944"/>
<dbReference type="GeneID" id="97421030"/>
<dbReference type="KEGG" id="art:Arth_2944"/>
<dbReference type="eggNOG" id="COG0361">
    <property type="taxonomic scope" value="Bacteria"/>
</dbReference>
<dbReference type="HOGENOM" id="CLU_151267_1_0_11"/>
<dbReference type="OrthoDB" id="9803250at2"/>
<dbReference type="Proteomes" id="UP000000754">
    <property type="component" value="Chromosome"/>
</dbReference>
<dbReference type="GO" id="GO:0005829">
    <property type="term" value="C:cytosol"/>
    <property type="evidence" value="ECO:0007669"/>
    <property type="project" value="TreeGrafter"/>
</dbReference>
<dbReference type="GO" id="GO:0043022">
    <property type="term" value="F:ribosome binding"/>
    <property type="evidence" value="ECO:0007669"/>
    <property type="project" value="UniProtKB-UniRule"/>
</dbReference>
<dbReference type="GO" id="GO:0019843">
    <property type="term" value="F:rRNA binding"/>
    <property type="evidence" value="ECO:0007669"/>
    <property type="project" value="UniProtKB-UniRule"/>
</dbReference>
<dbReference type="GO" id="GO:0003743">
    <property type="term" value="F:translation initiation factor activity"/>
    <property type="evidence" value="ECO:0007669"/>
    <property type="project" value="UniProtKB-UniRule"/>
</dbReference>
<dbReference type="CDD" id="cd04451">
    <property type="entry name" value="S1_IF1"/>
    <property type="match status" value="1"/>
</dbReference>
<dbReference type="FunFam" id="2.40.50.140:FF:000002">
    <property type="entry name" value="Translation initiation factor IF-1"/>
    <property type="match status" value="1"/>
</dbReference>
<dbReference type="Gene3D" id="2.40.50.140">
    <property type="entry name" value="Nucleic acid-binding proteins"/>
    <property type="match status" value="1"/>
</dbReference>
<dbReference type="HAMAP" id="MF_00075">
    <property type="entry name" value="IF_1"/>
    <property type="match status" value="1"/>
</dbReference>
<dbReference type="InterPro" id="IPR012340">
    <property type="entry name" value="NA-bd_OB-fold"/>
</dbReference>
<dbReference type="InterPro" id="IPR006196">
    <property type="entry name" value="RNA-binding_domain_S1_IF1"/>
</dbReference>
<dbReference type="InterPro" id="IPR004368">
    <property type="entry name" value="TIF_IF1"/>
</dbReference>
<dbReference type="NCBIfam" id="TIGR00008">
    <property type="entry name" value="infA"/>
    <property type="match status" value="1"/>
</dbReference>
<dbReference type="PANTHER" id="PTHR33370">
    <property type="entry name" value="TRANSLATION INITIATION FACTOR IF-1, CHLOROPLASTIC"/>
    <property type="match status" value="1"/>
</dbReference>
<dbReference type="PANTHER" id="PTHR33370:SF1">
    <property type="entry name" value="TRANSLATION INITIATION FACTOR IF-1, CHLOROPLASTIC"/>
    <property type="match status" value="1"/>
</dbReference>
<dbReference type="Pfam" id="PF01176">
    <property type="entry name" value="eIF-1a"/>
    <property type="match status" value="1"/>
</dbReference>
<dbReference type="SUPFAM" id="SSF50249">
    <property type="entry name" value="Nucleic acid-binding proteins"/>
    <property type="match status" value="1"/>
</dbReference>
<dbReference type="PROSITE" id="PS50832">
    <property type="entry name" value="S1_IF1_TYPE"/>
    <property type="match status" value="1"/>
</dbReference>
<feature type="chain" id="PRO_0000338761" description="Translation initiation factor IF-1">
    <location>
        <begin position="1"/>
        <end position="73"/>
    </location>
</feature>
<feature type="domain" description="S1-like" evidence="1">
    <location>
        <begin position="1"/>
        <end position="73"/>
    </location>
</feature>
<protein>
    <recommendedName>
        <fullName evidence="1">Translation initiation factor IF-1</fullName>
    </recommendedName>
</protein>